<keyword id="KW-0028">Amino-acid biosynthesis</keyword>
<keyword id="KW-0057">Aromatic amino acid biosynthesis</keyword>
<keyword id="KW-0150">Chloroplast</keyword>
<keyword id="KW-0456">Lyase</keyword>
<keyword id="KW-0584">Phenylalanine biosynthesis</keyword>
<keyword id="KW-0934">Plastid</keyword>
<keyword id="KW-0809">Transit peptide</keyword>
<protein>
    <recommendedName>
        <fullName evidence="7">Arogenate dehydratase 2</fullName>
        <shortName evidence="7">PhADT2</shortName>
        <ecNumber evidence="6">4.2.1.91</ecNumber>
    </recommendedName>
    <alternativeName>
        <fullName evidence="8">Prephenate dehydratase ADT3</fullName>
        <ecNumber evidence="3 6">4.2.1.51</ecNumber>
    </alternativeName>
</protein>
<evidence type="ECO:0000250" key="1">
    <source>
        <dbReference type="UniProtKB" id="D3U715"/>
    </source>
</evidence>
<evidence type="ECO:0000255" key="2"/>
<evidence type="ECO:0000255" key="3">
    <source>
        <dbReference type="PROSITE-ProRule" id="PRU00517"/>
    </source>
</evidence>
<evidence type="ECO:0000255" key="4">
    <source>
        <dbReference type="PROSITE-ProRule" id="PRU01007"/>
    </source>
</evidence>
<evidence type="ECO:0000256" key="5">
    <source>
        <dbReference type="SAM" id="MobiDB-lite"/>
    </source>
</evidence>
<evidence type="ECO:0000269" key="6">
    <source>
    </source>
</evidence>
<evidence type="ECO:0000303" key="7">
    <source>
    </source>
</evidence>
<evidence type="ECO:0000305" key="8"/>
<feature type="transit peptide" description="Chloroplast" evidence="2">
    <location>
        <begin position="1"/>
        <end position="47"/>
    </location>
</feature>
<feature type="chain" id="PRO_0000451503" description="Arogenate dehydratase 2">
    <location>
        <begin position="48"/>
        <end position="394"/>
    </location>
</feature>
<feature type="domain" description="Prephenate dehydratase" evidence="3">
    <location>
        <begin position="108"/>
        <end position="283"/>
    </location>
</feature>
<feature type="domain" description="ACT" evidence="4">
    <location>
        <begin position="297"/>
        <end position="388"/>
    </location>
</feature>
<feature type="region of interest" description="Disordered" evidence="5">
    <location>
        <begin position="1"/>
        <end position="24"/>
    </location>
</feature>
<accession>D3U716</accession>
<dbReference type="EC" id="4.2.1.91" evidence="6"/>
<dbReference type="EC" id="4.2.1.51" evidence="3 6"/>
<dbReference type="EMBL" id="FJ790413">
    <property type="protein sequence ID" value="ACY79503.1"/>
    <property type="molecule type" value="mRNA"/>
</dbReference>
<dbReference type="SMR" id="D3U716"/>
<dbReference type="BRENDA" id="4.2.1.91">
    <property type="organism ID" value="4700"/>
</dbReference>
<dbReference type="UniPathway" id="UPA00121">
    <property type="reaction ID" value="UER00344"/>
</dbReference>
<dbReference type="GO" id="GO:0009507">
    <property type="term" value="C:chloroplast"/>
    <property type="evidence" value="ECO:0000314"/>
    <property type="project" value="UniProtKB"/>
</dbReference>
<dbReference type="GO" id="GO:0009570">
    <property type="term" value="C:chloroplast stroma"/>
    <property type="evidence" value="ECO:0007669"/>
    <property type="project" value="UniProtKB-SubCell"/>
</dbReference>
<dbReference type="GO" id="GO:0047769">
    <property type="term" value="F:arogenate dehydratase activity"/>
    <property type="evidence" value="ECO:0000314"/>
    <property type="project" value="UniProtKB"/>
</dbReference>
<dbReference type="GO" id="GO:0004664">
    <property type="term" value="F:prephenate dehydratase activity"/>
    <property type="evidence" value="ECO:0000314"/>
    <property type="project" value="UniProtKB"/>
</dbReference>
<dbReference type="GO" id="GO:0009094">
    <property type="term" value="P:L-phenylalanine biosynthetic process"/>
    <property type="evidence" value="ECO:0007669"/>
    <property type="project" value="UniProtKB-UniPathway"/>
</dbReference>
<dbReference type="CDD" id="cd04905">
    <property type="entry name" value="ACT_CM-PDT"/>
    <property type="match status" value="1"/>
</dbReference>
<dbReference type="CDD" id="cd13631">
    <property type="entry name" value="PBP2_Ct-PDT_like"/>
    <property type="match status" value="1"/>
</dbReference>
<dbReference type="FunFam" id="3.30.70.260:FF:000028">
    <property type="entry name" value="Arogenate dehydratase"/>
    <property type="match status" value="1"/>
</dbReference>
<dbReference type="FunFam" id="3.40.190.10:FF:000028">
    <property type="entry name" value="Arogenate dehydratase"/>
    <property type="match status" value="1"/>
</dbReference>
<dbReference type="FunFam" id="3.40.190.10:FF:000031">
    <property type="entry name" value="Arogenate dehydratase"/>
    <property type="match status" value="1"/>
</dbReference>
<dbReference type="Gene3D" id="3.30.70.260">
    <property type="match status" value="1"/>
</dbReference>
<dbReference type="Gene3D" id="3.40.190.10">
    <property type="entry name" value="Periplasmic binding protein-like II"/>
    <property type="match status" value="2"/>
</dbReference>
<dbReference type="InterPro" id="IPR045865">
    <property type="entry name" value="ACT-like_dom_sf"/>
</dbReference>
<dbReference type="InterPro" id="IPR002912">
    <property type="entry name" value="ACT_dom"/>
</dbReference>
<dbReference type="InterPro" id="IPR001086">
    <property type="entry name" value="Preph_deHydtase"/>
</dbReference>
<dbReference type="InterPro" id="IPR018528">
    <property type="entry name" value="Preph_deHydtase_CS"/>
</dbReference>
<dbReference type="NCBIfam" id="NF008865">
    <property type="entry name" value="PRK11898.1"/>
    <property type="match status" value="1"/>
</dbReference>
<dbReference type="PANTHER" id="PTHR21022:SF42">
    <property type="entry name" value="AROGENATE DEHYDRATASE_PREPHENATE DEHYDRATASE 2, CHLOROPLASTIC"/>
    <property type="match status" value="1"/>
</dbReference>
<dbReference type="PANTHER" id="PTHR21022">
    <property type="entry name" value="PREPHENATE DEHYDRATASE P PROTEIN"/>
    <property type="match status" value="1"/>
</dbReference>
<dbReference type="Pfam" id="PF00800">
    <property type="entry name" value="PDT"/>
    <property type="match status" value="1"/>
</dbReference>
<dbReference type="SUPFAM" id="SSF55021">
    <property type="entry name" value="ACT-like"/>
    <property type="match status" value="1"/>
</dbReference>
<dbReference type="SUPFAM" id="SSF53850">
    <property type="entry name" value="Periplasmic binding protein-like II"/>
    <property type="match status" value="1"/>
</dbReference>
<dbReference type="PROSITE" id="PS51671">
    <property type="entry name" value="ACT"/>
    <property type="match status" value="1"/>
</dbReference>
<dbReference type="PROSITE" id="PS00857">
    <property type="entry name" value="PREPHENATE_DEHYDR_1"/>
    <property type="match status" value="1"/>
</dbReference>
<dbReference type="PROSITE" id="PS00858">
    <property type="entry name" value="PREPHENATE_DEHYDR_2"/>
    <property type="match status" value="1"/>
</dbReference>
<dbReference type="PROSITE" id="PS51171">
    <property type="entry name" value="PREPHENATE_DEHYDR_3"/>
    <property type="match status" value="1"/>
</dbReference>
<organism>
    <name type="scientific">Petunia hybrida</name>
    <name type="common">Petunia</name>
    <dbReference type="NCBI Taxonomy" id="4102"/>
    <lineage>
        <taxon>Eukaryota</taxon>
        <taxon>Viridiplantae</taxon>
        <taxon>Streptophyta</taxon>
        <taxon>Embryophyta</taxon>
        <taxon>Tracheophyta</taxon>
        <taxon>Spermatophyta</taxon>
        <taxon>Magnoliopsida</taxon>
        <taxon>eudicotyledons</taxon>
        <taxon>Gunneridae</taxon>
        <taxon>Pentapetalae</taxon>
        <taxon>asterids</taxon>
        <taxon>lamiids</taxon>
        <taxon>Solanales</taxon>
        <taxon>Solanaceae</taxon>
        <taxon>Petunioideae</taxon>
        <taxon>Petunia</taxon>
    </lineage>
</organism>
<comment type="function">
    <text evidence="1 6">Converts the prephenate and L-arogenate produced from the shikimate-chorismate pathway into 3-phenylpyruvate and phenylalanine (Phe), respectively (PubMed:20215586). Involved in floral volatile benzenoids and phenylpropanoids (FVBP) production (By similarity).</text>
</comment>
<comment type="catalytic activity">
    <reaction evidence="6">
        <text>prephenate + H(+) = 3-phenylpyruvate + CO2 + H2O</text>
        <dbReference type="Rhea" id="RHEA:21648"/>
        <dbReference type="ChEBI" id="CHEBI:15377"/>
        <dbReference type="ChEBI" id="CHEBI:15378"/>
        <dbReference type="ChEBI" id="CHEBI:16526"/>
        <dbReference type="ChEBI" id="CHEBI:18005"/>
        <dbReference type="ChEBI" id="CHEBI:29934"/>
        <dbReference type="EC" id="4.2.1.51"/>
    </reaction>
    <physiologicalReaction direction="left-to-right" evidence="6">
        <dbReference type="Rhea" id="RHEA:21649"/>
    </physiologicalReaction>
</comment>
<comment type="catalytic activity">
    <reaction evidence="6">
        <text>L-arogenate + H(+) = L-phenylalanine + CO2 + H2O</text>
        <dbReference type="Rhea" id="RHEA:12536"/>
        <dbReference type="ChEBI" id="CHEBI:15377"/>
        <dbReference type="ChEBI" id="CHEBI:15378"/>
        <dbReference type="ChEBI" id="CHEBI:16526"/>
        <dbReference type="ChEBI" id="CHEBI:58095"/>
        <dbReference type="ChEBI" id="CHEBI:58180"/>
        <dbReference type="EC" id="4.2.1.91"/>
    </reaction>
    <physiologicalReaction direction="left-to-right" evidence="6">
        <dbReference type="Rhea" id="RHEA:12537"/>
    </physiologicalReaction>
</comment>
<comment type="biophysicochemical properties">
    <kinetics>
        <KM evidence="6">66.7 uM for L-arogenate</KM>
        <KM evidence="6">752 uM for prephenate</KM>
        <Vmax evidence="6">30.277 pmol/sec/mg enzyme with L-arogenate as substrate</Vmax>
        <Vmax evidence="6">1.473 pmol/sec/mg enzyme with prephenate as substrate</Vmax>
        <text evidence="6">kcat is 1.231 sec(-1) with L-arogenate as substrate (PubMed:20215586). kcat is 0.060 sec(-1) with prephenate as substrate (PubMed:20215586).</text>
    </kinetics>
</comment>
<comment type="pathway">
    <text evidence="6">Amino-acid biosynthesis; L-phenylalanine biosynthesis; L-phenylalanine from L-arogenate: step 1/1.</text>
</comment>
<comment type="subcellular location">
    <subcellularLocation>
        <location evidence="6">Plastid</location>
        <location evidence="6">Chloroplast stroma</location>
    </subcellularLocation>
</comment>
<comment type="tissue specificity">
    <text evidence="6">Expressed at low levels in petals (corollas and tubes), stems, leaves, pistils, stamens, ovaries and sepals.</text>
</comment>
<comment type="developmental stage">
    <text evidence="6">Barely expressed throughout flower development.</text>
</comment>
<proteinExistence type="evidence at protein level"/>
<name>AROD2_PETHY</name>
<reference key="1">
    <citation type="journal article" date="2010" name="Plant Cell">
        <title>RNAi suppression of Arogenate Dehydratase1 reveals that phenylalanine is synthesized predominantly via the arogenate pathway in petunia petals.</title>
        <authorList>
            <person name="Maeda H."/>
            <person name="Shasany A.K."/>
            <person name="Schnepp J."/>
            <person name="Orlova I."/>
            <person name="Taguchi G."/>
            <person name="Cooper B.R."/>
            <person name="Rhodes D."/>
            <person name="Pichersky E."/>
            <person name="Dudareva N."/>
        </authorList>
    </citation>
    <scope>NUCLEOTIDE SEQUENCE [MRNA]</scope>
    <scope>FUNCTION</scope>
    <scope>CATALYTIC ACTIVITY</scope>
    <scope>PATHWAY</scope>
    <scope>BIOPHYSICOCHEMICAL PROPERTIES</scope>
    <scope>TISSUE SPECIFICITY</scope>
    <scope>DEVELOPMENTAL STAGE</scope>
    <scope>SUBCELLULAR LOCATION</scope>
    <scope>GENE FAMILY</scope>
    <scope>NOMENCLATURE</scope>
</reference>
<sequence length="394" mass="43424">MAATTTLRSPKIPHPPPESTPSNLSYLSQISLTPVPKRRRFISIYACSNAESNSQFGSEIKKSQAIELNKVSDEHPYEFNSKDSPNPLPRPLTSADLSNMATEGSRLRVAYQGVRGAYSESAAEKAYPNCEAVPCEQFDTAFEAVERWLVDRAVLPIENSLGGSIHRNYDLLLRHRLHIVGEVKLAIRHCLLANNGVKIEDLKRVLSHPQALAQCENNLTKLGLVREAVDDTAGAAKYIAFQQLKDAGAVASLAAARIYGLNVLAQDIQDDSDNVTRFLMLAREPIIPGTDKPFKTSVVFSLDEGPGVLFKALAVFAMRNINLTKIESRPLQKQALRVLDDSADGFPKYFPYLFYVDFEASMADQRAQNALGHLKEFATFLRVLGSYPSDSGIA</sequence>
<gene>
    <name evidence="7" type="primary">ADT2</name>
</gene>